<proteinExistence type="inferred from homology"/>
<comment type="function">
    <text evidence="2">Transaldolase is important for the balance of metabolites in the pentose-phosphate pathway.</text>
</comment>
<comment type="catalytic activity">
    <reaction evidence="2">
        <text>D-sedoheptulose 7-phosphate + D-glyceraldehyde 3-phosphate = D-erythrose 4-phosphate + beta-D-fructose 6-phosphate</text>
        <dbReference type="Rhea" id="RHEA:17053"/>
        <dbReference type="ChEBI" id="CHEBI:16897"/>
        <dbReference type="ChEBI" id="CHEBI:57483"/>
        <dbReference type="ChEBI" id="CHEBI:57634"/>
        <dbReference type="ChEBI" id="CHEBI:59776"/>
        <dbReference type="EC" id="2.2.1.2"/>
    </reaction>
</comment>
<comment type="pathway">
    <text evidence="2">Carbohydrate degradation; pentose phosphate pathway; D-glyceraldehyde 3-phosphate and beta-D-fructose 6-phosphate from D-ribose 5-phosphate and D-xylulose 5-phosphate (non-oxidative stage): step 2/3.</text>
</comment>
<comment type="subunit">
    <text evidence="1">Homodimer.</text>
</comment>
<comment type="subcellular location">
    <subcellularLocation>
        <location evidence="2">Cytoplasm</location>
    </subcellularLocation>
</comment>
<comment type="similarity">
    <text evidence="2">Belongs to the transaldolase family. Type 1 subfamily.</text>
</comment>
<organism>
    <name type="scientific">Salmonella paratyphi A (strain ATCC 9150 / SARB42)</name>
    <dbReference type="NCBI Taxonomy" id="295319"/>
    <lineage>
        <taxon>Bacteria</taxon>
        <taxon>Pseudomonadati</taxon>
        <taxon>Pseudomonadota</taxon>
        <taxon>Gammaproteobacteria</taxon>
        <taxon>Enterobacterales</taxon>
        <taxon>Enterobacteriaceae</taxon>
        <taxon>Salmonella</taxon>
    </lineage>
</organism>
<feature type="chain" id="PRO_0000230970" description="Transaldolase 2">
    <location>
        <begin position="1"/>
        <end position="316"/>
    </location>
</feature>
<feature type="active site" description="Schiff-base intermediate with substrate" evidence="2">
    <location>
        <position position="131"/>
    </location>
</feature>
<reference key="1">
    <citation type="journal article" date="2004" name="Nat. Genet.">
        <title>Comparison of genome degradation in Paratyphi A and Typhi, human-restricted serovars of Salmonella enterica that cause typhoid.</title>
        <authorList>
            <person name="McClelland M."/>
            <person name="Sanderson K.E."/>
            <person name="Clifton S.W."/>
            <person name="Latreille P."/>
            <person name="Porwollik S."/>
            <person name="Sabo A."/>
            <person name="Meyer R."/>
            <person name="Bieri T."/>
            <person name="Ozersky P."/>
            <person name="McLellan M."/>
            <person name="Harkins C.R."/>
            <person name="Wang C."/>
            <person name="Nguyen C."/>
            <person name="Berghoff A."/>
            <person name="Elliott G."/>
            <person name="Kohlberg S."/>
            <person name="Strong C."/>
            <person name="Du F."/>
            <person name="Carter J."/>
            <person name="Kremizki C."/>
            <person name="Layman D."/>
            <person name="Leonard S."/>
            <person name="Sun H."/>
            <person name="Fulton L."/>
            <person name="Nash W."/>
            <person name="Miner T."/>
            <person name="Minx P."/>
            <person name="Delehaunty K."/>
            <person name="Fronick C."/>
            <person name="Magrini V."/>
            <person name="Nhan M."/>
            <person name="Warren W."/>
            <person name="Florea L."/>
            <person name="Spieth J."/>
            <person name="Wilson R.K."/>
        </authorList>
    </citation>
    <scope>NUCLEOTIDE SEQUENCE [LARGE SCALE GENOMIC DNA]</scope>
    <source>
        <strain>ATCC 9150 / SARB42</strain>
    </source>
</reference>
<sequence length="316" mass="35538">MNQLDGIKQFTTVVADSGDIESIRHYQPQDATTNPSLLLKAAGLEQYGHLIEDAIAWGKKHGGTQEQQVAAASDKLAVNFGAEILKSIPGRVSTEVDARLSFDKEKSIEKARHLVGLYQQQGIDKSRILIKLAATWEGIRAAGQLEKEGINCNLTLLFSFAQARACAEAGVYLISPFVGRIYDWYQARSPLEPYVVEEDPGVKSVRNIYDYFKQHRYETIVMGASFRRTEQILALTGCDRLTISPNLLKELKEKEEPVIRKLVPSSQMFHRPTSMTEAEFRWEHNQDAMAVEKLSEGIRLFAVDQRKLEDLLAAKL</sequence>
<protein>
    <recommendedName>
        <fullName evidence="2">Transaldolase 2</fullName>
        <ecNumber evidence="2">2.2.1.2</ecNumber>
    </recommendedName>
</protein>
<name>TAL2_SALPA</name>
<dbReference type="EC" id="2.2.1.2" evidence="2"/>
<dbReference type="EMBL" id="CP000026">
    <property type="protein sequence ID" value="AAV76407.1"/>
    <property type="molecule type" value="Genomic_DNA"/>
</dbReference>
<dbReference type="SMR" id="Q5PCU4"/>
<dbReference type="KEGG" id="spt:SPA0396"/>
<dbReference type="HOGENOM" id="CLU_047470_0_1_6"/>
<dbReference type="UniPathway" id="UPA00115">
    <property type="reaction ID" value="UER00414"/>
</dbReference>
<dbReference type="Proteomes" id="UP000008185">
    <property type="component" value="Chromosome"/>
</dbReference>
<dbReference type="GO" id="GO:0005829">
    <property type="term" value="C:cytosol"/>
    <property type="evidence" value="ECO:0007669"/>
    <property type="project" value="TreeGrafter"/>
</dbReference>
<dbReference type="GO" id="GO:0004801">
    <property type="term" value="F:transaldolase activity"/>
    <property type="evidence" value="ECO:0000250"/>
    <property type="project" value="UniProtKB"/>
</dbReference>
<dbReference type="GO" id="GO:0005975">
    <property type="term" value="P:carbohydrate metabolic process"/>
    <property type="evidence" value="ECO:0007669"/>
    <property type="project" value="InterPro"/>
</dbReference>
<dbReference type="GO" id="GO:0006098">
    <property type="term" value="P:pentose-phosphate shunt"/>
    <property type="evidence" value="ECO:0007669"/>
    <property type="project" value="UniProtKB-UniRule"/>
</dbReference>
<dbReference type="CDD" id="cd00957">
    <property type="entry name" value="Transaldolase_TalAB"/>
    <property type="match status" value="1"/>
</dbReference>
<dbReference type="FunFam" id="3.20.20.70:FF:000002">
    <property type="entry name" value="Transaldolase"/>
    <property type="match status" value="1"/>
</dbReference>
<dbReference type="Gene3D" id="3.20.20.70">
    <property type="entry name" value="Aldolase class I"/>
    <property type="match status" value="1"/>
</dbReference>
<dbReference type="HAMAP" id="MF_00492">
    <property type="entry name" value="Transaldolase_1"/>
    <property type="match status" value="1"/>
</dbReference>
<dbReference type="InterPro" id="IPR013785">
    <property type="entry name" value="Aldolase_TIM"/>
</dbReference>
<dbReference type="InterPro" id="IPR001585">
    <property type="entry name" value="TAL/FSA"/>
</dbReference>
<dbReference type="InterPro" id="IPR004730">
    <property type="entry name" value="Transaldolase_1"/>
</dbReference>
<dbReference type="InterPro" id="IPR018225">
    <property type="entry name" value="Transaldolase_AS"/>
</dbReference>
<dbReference type="NCBIfam" id="NF009001">
    <property type="entry name" value="PRK12346.1"/>
    <property type="match status" value="1"/>
</dbReference>
<dbReference type="NCBIfam" id="TIGR00874">
    <property type="entry name" value="talAB"/>
    <property type="match status" value="1"/>
</dbReference>
<dbReference type="PANTHER" id="PTHR10683">
    <property type="entry name" value="TRANSALDOLASE"/>
    <property type="match status" value="1"/>
</dbReference>
<dbReference type="PANTHER" id="PTHR10683:SF16">
    <property type="entry name" value="TRANSALDOLASE A"/>
    <property type="match status" value="1"/>
</dbReference>
<dbReference type="Pfam" id="PF00923">
    <property type="entry name" value="TAL_FSA"/>
    <property type="match status" value="1"/>
</dbReference>
<dbReference type="SUPFAM" id="SSF51569">
    <property type="entry name" value="Aldolase"/>
    <property type="match status" value="1"/>
</dbReference>
<dbReference type="PROSITE" id="PS01054">
    <property type="entry name" value="TRANSALDOLASE_1"/>
    <property type="match status" value="1"/>
</dbReference>
<evidence type="ECO:0000250" key="1"/>
<evidence type="ECO:0000255" key="2">
    <source>
        <dbReference type="HAMAP-Rule" id="MF_00492"/>
    </source>
</evidence>
<accession>Q5PCU4</accession>
<keyword id="KW-0963">Cytoplasm</keyword>
<keyword id="KW-0570">Pentose shunt</keyword>
<keyword id="KW-0704">Schiff base</keyword>
<keyword id="KW-0808">Transferase</keyword>
<gene>
    <name evidence="2" type="primary">tal2</name>
    <name type="ordered locus">SPA0396</name>
</gene>